<reference key="1">
    <citation type="journal article" date="2005" name="J. Bacteriol.">
        <title>Whole-genome sequence analysis of Pseudomonas syringae pv. phaseolicola 1448A reveals divergence among pathovars in genes involved in virulence and transposition.</title>
        <authorList>
            <person name="Joardar V."/>
            <person name="Lindeberg M."/>
            <person name="Jackson R.W."/>
            <person name="Selengut J."/>
            <person name="Dodson R."/>
            <person name="Brinkac L.M."/>
            <person name="Daugherty S.C."/>
            <person name="DeBoy R.T."/>
            <person name="Durkin A.S."/>
            <person name="Gwinn Giglio M."/>
            <person name="Madupu R."/>
            <person name="Nelson W.C."/>
            <person name="Rosovitz M.J."/>
            <person name="Sullivan S.A."/>
            <person name="Crabtree J."/>
            <person name="Creasy T."/>
            <person name="Davidsen T.M."/>
            <person name="Haft D.H."/>
            <person name="Zafar N."/>
            <person name="Zhou L."/>
            <person name="Halpin R."/>
            <person name="Holley T."/>
            <person name="Khouri H.M."/>
            <person name="Feldblyum T.V."/>
            <person name="White O."/>
            <person name="Fraser C.M."/>
            <person name="Chatterjee A.K."/>
            <person name="Cartinhour S."/>
            <person name="Schneider D."/>
            <person name="Mansfield J.W."/>
            <person name="Collmer A."/>
            <person name="Buell R."/>
        </authorList>
    </citation>
    <scope>NUCLEOTIDE SEQUENCE [LARGE SCALE GENOMIC DNA]</scope>
    <source>
        <strain>1448A / Race 6</strain>
    </source>
</reference>
<sequence length="87" mass="9710">MARVTVEDCLEHVDNRFELVMLSTKRARQLATGGKEPKLAWENDKPTVMALREIAAGLMDYAVIAEAEIVEDEPLFAAFEDESNEAV</sequence>
<dbReference type="EC" id="2.7.7.6" evidence="1"/>
<dbReference type="EMBL" id="CP000058">
    <property type="protein sequence ID" value="AAZ33420.1"/>
    <property type="status" value="ALT_INIT"/>
    <property type="molecule type" value="Genomic_DNA"/>
</dbReference>
<dbReference type="RefSeq" id="WP_002551500.1">
    <property type="nucleotide sequence ID" value="NC_005773.3"/>
</dbReference>
<dbReference type="SMR" id="Q48Q16"/>
<dbReference type="GeneID" id="73733202"/>
<dbReference type="KEGG" id="psp:PSPPH_0198"/>
<dbReference type="eggNOG" id="COG1758">
    <property type="taxonomic scope" value="Bacteria"/>
</dbReference>
<dbReference type="HOGENOM" id="CLU_125406_5_2_6"/>
<dbReference type="Proteomes" id="UP000000551">
    <property type="component" value="Chromosome"/>
</dbReference>
<dbReference type="GO" id="GO:0000428">
    <property type="term" value="C:DNA-directed RNA polymerase complex"/>
    <property type="evidence" value="ECO:0007669"/>
    <property type="project" value="UniProtKB-KW"/>
</dbReference>
<dbReference type="GO" id="GO:0003677">
    <property type="term" value="F:DNA binding"/>
    <property type="evidence" value="ECO:0007669"/>
    <property type="project" value="UniProtKB-UniRule"/>
</dbReference>
<dbReference type="GO" id="GO:0003899">
    <property type="term" value="F:DNA-directed RNA polymerase activity"/>
    <property type="evidence" value="ECO:0007669"/>
    <property type="project" value="UniProtKB-UniRule"/>
</dbReference>
<dbReference type="GO" id="GO:0006351">
    <property type="term" value="P:DNA-templated transcription"/>
    <property type="evidence" value="ECO:0007669"/>
    <property type="project" value="UniProtKB-UniRule"/>
</dbReference>
<dbReference type="Gene3D" id="3.90.940.10">
    <property type="match status" value="1"/>
</dbReference>
<dbReference type="HAMAP" id="MF_00366">
    <property type="entry name" value="RNApol_bact_RpoZ"/>
    <property type="match status" value="1"/>
</dbReference>
<dbReference type="InterPro" id="IPR003716">
    <property type="entry name" value="DNA-dir_RNA_pol_omega"/>
</dbReference>
<dbReference type="InterPro" id="IPR006110">
    <property type="entry name" value="Pol_omega/Rpo6/RPB6"/>
</dbReference>
<dbReference type="InterPro" id="IPR036161">
    <property type="entry name" value="RPB6/omega-like_sf"/>
</dbReference>
<dbReference type="NCBIfam" id="TIGR00690">
    <property type="entry name" value="rpoZ"/>
    <property type="match status" value="1"/>
</dbReference>
<dbReference type="PANTHER" id="PTHR34476">
    <property type="entry name" value="DNA-DIRECTED RNA POLYMERASE SUBUNIT OMEGA"/>
    <property type="match status" value="1"/>
</dbReference>
<dbReference type="PANTHER" id="PTHR34476:SF1">
    <property type="entry name" value="DNA-DIRECTED RNA POLYMERASE SUBUNIT OMEGA"/>
    <property type="match status" value="1"/>
</dbReference>
<dbReference type="Pfam" id="PF01192">
    <property type="entry name" value="RNA_pol_Rpb6"/>
    <property type="match status" value="1"/>
</dbReference>
<dbReference type="SMART" id="SM01409">
    <property type="entry name" value="RNA_pol_Rpb6"/>
    <property type="match status" value="1"/>
</dbReference>
<dbReference type="SUPFAM" id="SSF63562">
    <property type="entry name" value="RPB6/omega subunit-like"/>
    <property type="match status" value="1"/>
</dbReference>
<accession>Q48Q16</accession>
<name>RPOZ_PSE14</name>
<feature type="chain" id="PRO_0000237492" description="DNA-directed RNA polymerase subunit omega">
    <location>
        <begin position="1"/>
        <end position="87"/>
    </location>
</feature>
<keyword id="KW-0240">DNA-directed RNA polymerase</keyword>
<keyword id="KW-0548">Nucleotidyltransferase</keyword>
<keyword id="KW-0804">Transcription</keyword>
<keyword id="KW-0808">Transferase</keyword>
<evidence type="ECO:0000255" key="1">
    <source>
        <dbReference type="HAMAP-Rule" id="MF_00366"/>
    </source>
</evidence>
<evidence type="ECO:0000305" key="2"/>
<organism>
    <name type="scientific">Pseudomonas savastanoi pv. phaseolicola (strain 1448A / Race 6)</name>
    <name type="common">Pseudomonas syringae pv. phaseolicola (strain 1448A / Race 6)</name>
    <dbReference type="NCBI Taxonomy" id="264730"/>
    <lineage>
        <taxon>Bacteria</taxon>
        <taxon>Pseudomonadati</taxon>
        <taxon>Pseudomonadota</taxon>
        <taxon>Gammaproteobacteria</taxon>
        <taxon>Pseudomonadales</taxon>
        <taxon>Pseudomonadaceae</taxon>
        <taxon>Pseudomonas</taxon>
    </lineage>
</organism>
<gene>
    <name evidence="1" type="primary">rpoZ</name>
    <name type="ordered locus">PSPPH_0198</name>
</gene>
<protein>
    <recommendedName>
        <fullName evidence="1">DNA-directed RNA polymerase subunit omega</fullName>
        <shortName evidence="1">RNAP omega subunit</shortName>
        <ecNumber evidence="1">2.7.7.6</ecNumber>
    </recommendedName>
    <alternativeName>
        <fullName evidence="1">RNA polymerase omega subunit</fullName>
    </alternativeName>
    <alternativeName>
        <fullName evidence="1">Transcriptase subunit omega</fullName>
    </alternativeName>
</protein>
<comment type="function">
    <text evidence="1">Promotes RNA polymerase assembly. Latches the N- and C-terminal regions of the beta' subunit thereby facilitating its interaction with the beta and alpha subunits.</text>
</comment>
<comment type="catalytic activity">
    <reaction evidence="1">
        <text>RNA(n) + a ribonucleoside 5'-triphosphate = RNA(n+1) + diphosphate</text>
        <dbReference type="Rhea" id="RHEA:21248"/>
        <dbReference type="Rhea" id="RHEA-COMP:14527"/>
        <dbReference type="Rhea" id="RHEA-COMP:17342"/>
        <dbReference type="ChEBI" id="CHEBI:33019"/>
        <dbReference type="ChEBI" id="CHEBI:61557"/>
        <dbReference type="ChEBI" id="CHEBI:140395"/>
        <dbReference type="EC" id="2.7.7.6"/>
    </reaction>
</comment>
<comment type="subunit">
    <text evidence="1">The RNAP catalytic core consists of 2 alpha, 1 beta, 1 beta' and 1 omega subunit. When a sigma factor is associated with the core the holoenzyme is formed, which can initiate transcription.</text>
</comment>
<comment type="similarity">
    <text evidence="1">Belongs to the RNA polymerase subunit omega family.</text>
</comment>
<comment type="sequence caution" evidence="2">
    <conflict type="erroneous initiation">
        <sequence resource="EMBL-CDS" id="AAZ33420"/>
    </conflict>
</comment>
<proteinExistence type="inferred from homology"/>